<feature type="chain" id="PRO_0000341362" description="Cysteine-rich DPF motif domain-containing protein 1">
    <location>
        <begin position="1"/>
        <end position="124"/>
    </location>
</feature>
<feature type="region of interest" description="Disordered" evidence="1">
    <location>
        <begin position="105"/>
        <end position="124"/>
    </location>
</feature>
<feature type="compositionally biased region" description="Basic residues" evidence="1">
    <location>
        <begin position="115"/>
        <end position="124"/>
    </location>
</feature>
<name>CDPF1_CHICK</name>
<comment type="similarity">
    <text evidence="2">Belongs to the CDPF1 family.</text>
</comment>
<sequence length="124" mass="14169">MDSSKEPEPTGEFKCQLCGLTAPYTYYGQKPPNTHSIVILEDSYVMKDPFTPDKEKFLILGSLCSLCRRAVCVGAECSLFYTKRFCLPCVNENLQAFPLEIQEDMDKRKPQSKCLTRKKKDSRT</sequence>
<reference key="1">
    <citation type="journal article" date="2005" name="Genome Biol.">
        <title>Full-length cDNAs from chicken bursal lymphocytes to facilitate gene function analysis.</title>
        <authorList>
            <person name="Caldwell R.B."/>
            <person name="Kierzek A.M."/>
            <person name="Arakawa H."/>
            <person name="Bezzubov Y."/>
            <person name="Zaim J."/>
            <person name="Fiedler P."/>
            <person name="Kutter S."/>
            <person name="Blagodatski A."/>
            <person name="Kostovska D."/>
            <person name="Koter M."/>
            <person name="Plachy J."/>
            <person name="Carninci P."/>
            <person name="Hayashizaki Y."/>
            <person name="Buerstedde J.-M."/>
        </authorList>
    </citation>
    <scope>NUCLEOTIDE SEQUENCE [LARGE SCALE MRNA]</scope>
    <source>
        <strain>CB</strain>
        <tissue>Bursa of Fabricius</tissue>
    </source>
</reference>
<accession>Q5ZKB8</accession>
<gene>
    <name type="primary">CDPF1</name>
    <name type="ORF">RCJMB04_11o5</name>
</gene>
<protein>
    <recommendedName>
        <fullName>Cysteine-rich DPF motif domain-containing protein 1</fullName>
    </recommendedName>
</protein>
<evidence type="ECO:0000256" key="1">
    <source>
        <dbReference type="SAM" id="MobiDB-lite"/>
    </source>
</evidence>
<evidence type="ECO:0000305" key="2"/>
<dbReference type="EMBL" id="AJ720166">
    <property type="protein sequence ID" value="CAG31825.1"/>
    <property type="molecule type" value="mRNA"/>
</dbReference>
<dbReference type="RefSeq" id="NP_001025943.1">
    <property type="nucleotide sequence ID" value="NM_001030772.1"/>
</dbReference>
<dbReference type="FunCoup" id="Q5ZKB8">
    <property type="interactions" value="48"/>
</dbReference>
<dbReference type="STRING" id="9031.ENSGALP00000041086"/>
<dbReference type="PaxDb" id="9031-ENSGALP00000041086"/>
<dbReference type="GeneID" id="418246"/>
<dbReference type="KEGG" id="gga:418246"/>
<dbReference type="CTD" id="150383"/>
<dbReference type="VEuPathDB" id="HostDB:geneid_418246"/>
<dbReference type="eggNOG" id="KOG4543">
    <property type="taxonomic scope" value="Eukaryota"/>
</dbReference>
<dbReference type="InParanoid" id="Q5ZKB8"/>
<dbReference type="OrthoDB" id="191995at2759"/>
<dbReference type="PhylomeDB" id="Q5ZKB8"/>
<dbReference type="PRO" id="PR:Q5ZKB8"/>
<dbReference type="Proteomes" id="UP000000539">
    <property type="component" value="Unassembled WGS sequence"/>
</dbReference>
<dbReference type="InterPro" id="IPR042426">
    <property type="entry name" value="CDPF1"/>
</dbReference>
<dbReference type="InterPro" id="IPR018785">
    <property type="entry name" value="CDPF1_dom"/>
</dbReference>
<dbReference type="PANTHER" id="PTHR31849:SF1">
    <property type="entry name" value="CYSTEINE-RICH DPF MOTIF DOMAIN-CONTAINING PROTEIN 1"/>
    <property type="match status" value="1"/>
</dbReference>
<dbReference type="PANTHER" id="PTHR31849">
    <property type="entry name" value="CYSTEINE-RICH PDF MOTIF DOMAIN-CONTAINING PROTEIN 1"/>
    <property type="match status" value="1"/>
</dbReference>
<dbReference type="Pfam" id="PF10170">
    <property type="entry name" value="C6_DPF"/>
    <property type="match status" value="1"/>
</dbReference>
<dbReference type="PRINTS" id="PR01995">
    <property type="entry name" value="UPF0595"/>
</dbReference>
<organism>
    <name type="scientific">Gallus gallus</name>
    <name type="common">Chicken</name>
    <dbReference type="NCBI Taxonomy" id="9031"/>
    <lineage>
        <taxon>Eukaryota</taxon>
        <taxon>Metazoa</taxon>
        <taxon>Chordata</taxon>
        <taxon>Craniata</taxon>
        <taxon>Vertebrata</taxon>
        <taxon>Euteleostomi</taxon>
        <taxon>Archelosauria</taxon>
        <taxon>Archosauria</taxon>
        <taxon>Dinosauria</taxon>
        <taxon>Saurischia</taxon>
        <taxon>Theropoda</taxon>
        <taxon>Coelurosauria</taxon>
        <taxon>Aves</taxon>
        <taxon>Neognathae</taxon>
        <taxon>Galloanserae</taxon>
        <taxon>Galliformes</taxon>
        <taxon>Phasianidae</taxon>
        <taxon>Phasianinae</taxon>
        <taxon>Gallus</taxon>
    </lineage>
</organism>
<proteinExistence type="evidence at transcript level"/>
<keyword id="KW-1185">Reference proteome</keyword>